<reference key="1">
    <citation type="journal article" date="2004" name="Nat. Genet.">
        <title>Comparison of genome degradation in Paratyphi A and Typhi, human-restricted serovars of Salmonella enterica that cause typhoid.</title>
        <authorList>
            <person name="McClelland M."/>
            <person name="Sanderson K.E."/>
            <person name="Clifton S.W."/>
            <person name="Latreille P."/>
            <person name="Porwollik S."/>
            <person name="Sabo A."/>
            <person name="Meyer R."/>
            <person name="Bieri T."/>
            <person name="Ozersky P."/>
            <person name="McLellan M."/>
            <person name="Harkins C.R."/>
            <person name="Wang C."/>
            <person name="Nguyen C."/>
            <person name="Berghoff A."/>
            <person name="Elliott G."/>
            <person name="Kohlberg S."/>
            <person name="Strong C."/>
            <person name="Du F."/>
            <person name="Carter J."/>
            <person name="Kremizki C."/>
            <person name="Layman D."/>
            <person name="Leonard S."/>
            <person name="Sun H."/>
            <person name="Fulton L."/>
            <person name="Nash W."/>
            <person name="Miner T."/>
            <person name="Minx P."/>
            <person name="Delehaunty K."/>
            <person name="Fronick C."/>
            <person name="Magrini V."/>
            <person name="Nhan M."/>
            <person name="Warren W."/>
            <person name="Florea L."/>
            <person name="Spieth J."/>
            <person name="Wilson R.K."/>
        </authorList>
    </citation>
    <scope>NUCLEOTIDE SEQUENCE [LARGE SCALE GENOMIC DNA]</scope>
    <source>
        <strain>ATCC 9150 / SARB42</strain>
    </source>
</reference>
<gene>
    <name evidence="1" type="primary">pyrI</name>
    <name type="ordered locus">SPA4260</name>
</gene>
<accession>Q5PJB3</accession>
<protein>
    <recommendedName>
        <fullName evidence="1">Aspartate carbamoyltransferase regulatory chain</fullName>
    </recommendedName>
</protein>
<dbReference type="EMBL" id="CP000026">
    <property type="protein sequence ID" value="AAV79994.1"/>
    <property type="molecule type" value="Genomic_DNA"/>
</dbReference>
<dbReference type="RefSeq" id="WP_000148563.1">
    <property type="nucleotide sequence ID" value="NC_006511.1"/>
</dbReference>
<dbReference type="SMR" id="Q5PJB3"/>
<dbReference type="KEGG" id="spt:SPA4260"/>
<dbReference type="HOGENOM" id="CLU_128576_0_0_6"/>
<dbReference type="Proteomes" id="UP000008185">
    <property type="component" value="Chromosome"/>
</dbReference>
<dbReference type="GO" id="GO:0009347">
    <property type="term" value="C:aspartate carbamoyltransferase complex"/>
    <property type="evidence" value="ECO:0007669"/>
    <property type="project" value="InterPro"/>
</dbReference>
<dbReference type="GO" id="GO:0046872">
    <property type="term" value="F:metal ion binding"/>
    <property type="evidence" value="ECO:0007669"/>
    <property type="project" value="UniProtKB-KW"/>
</dbReference>
<dbReference type="GO" id="GO:0006207">
    <property type="term" value="P:'de novo' pyrimidine nucleobase biosynthetic process"/>
    <property type="evidence" value="ECO:0007669"/>
    <property type="project" value="InterPro"/>
</dbReference>
<dbReference type="GO" id="GO:0006221">
    <property type="term" value="P:pyrimidine nucleotide biosynthetic process"/>
    <property type="evidence" value="ECO:0007669"/>
    <property type="project" value="UniProtKB-UniRule"/>
</dbReference>
<dbReference type="FunFam" id="2.30.30.20:FF:000001">
    <property type="entry name" value="Aspartate carbamoyltransferase regulatory chain"/>
    <property type="match status" value="1"/>
</dbReference>
<dbReference type="FunFam" id="3.30.70.140:FF:000001">
    <property type="entry name" value="Aspartate carbamoyltransferase regulatory chain"/>
    <property type="match status" value="1"/>
</dbReference>
<dbReference type="Gene3D" id="2.30.30.20">
    <property type="entry name" value="Aspartate carbamoyltransferase regulatory subunit, C-terminal domain"/>
    <property type="match status" value="1"/>
</dbReference>
<dbReference type="Gene3D" id="3.30.70.140">
    <property type="entry name" value="Aspartate carbamoyltransferase regulatory subunit, N-terminal domain"/>
    <property type="match status" value="1"/>
</dbReference>
<dbReference type="HAMAP" id="MF_00002">
    <property type="entry name" value="Asp_carb_tr_reg"/>
    <property type="match status" value="1"/>
</dbReference>
<dbReference type="InterPro" id="IPR020545">
    <property type="entry name" value="Asp_carbamoyltransf_reg_N"/>
</dbReference>
<dbReference type="InterPro" id="IPR002801">
    <property type="entry name" value="Asp_carbamoylTrfase_reg"/>
</dbReference>
<dbReference type="InterPro" id="IPR020542">
    <property type="entry name" value="Asp_carbamoyltrfase_reg_C"/>
</dbReference>
<dbReference type="InterPro" id="IPR036792">
    <property type="entry name" value="Asp_carbatrfase_reg_C_sf"/>
</dbReference>
<dbReference type="InterPro" id="IPR036793">
    <property type="entry name" value="Asp_carbatrfase_reg_N_sf"/>
</dbReference>
<dbReference type="NCBIfam" id="TIGR00240">
    <property type="entry name" value="ATCase_reg"/>
    <property type="match status" value="1"/>
</dbReference>
<dbReference type="PANTHER" id="PTHR35805">
    <property type="entry name" value="ASPARTATE CARBAMOYLTRANSFERASE REGULATORY CHAIN"/>
    <property type="match status" value="1"/>
</dbReference>
<dbReference type="PANTHER" id="PTHR35805:SF1">
    <property type="entry name" value="ASPARTATE CARBAMOYLTRANSFERASE REGULATORY CHAIN"/>
    <property type="match status" value="1"/>
</dbReference>
<dbReference type="Pfam" id="PF01948">
    <property type="entry name" value="PyrI"/>
    <property type="match status" value="1"/>
</dbReference>
<dbReference type="Pfam" id="PF02748">
    <property type="entry name" value="PyrI_C"/>
    <property type="match status" value="1"/>
</dbReference>
<dbReference type="SUPFAM" id="SSF57825">
    <property type="entry name" value="Aspartate carbamoyltransferase, Regulatory-chain, C-terminal domain"/>
    <property type="match status" value="1"/>
</dbReference>
<dbReference type="SUPFAM" id="SSF54893">
    <property type="entry name" value="Aspartate carbamoyltransferase, Regulatory-chain, N-terminal domain"/>
    <property type="match status" value="1"/>
</dbReference>
<proteinExistence type="inferred from homology"/>
<comment type="function">
    <text evidence="1">Involved in allosteric regulation of aspartate carbamoyltransferase.</text>
</comment>
<comment type="cofactor">
    <cofactor evidence="1">
        <name>Zn(2+)</name>
        <dbReference type="ChEBI" id="CHEBI:29105"/>
    </cofactor>
    <text evidence="1">Binds 1 zinc ion per subunit.</text>
</comment>
<comment type="subunit">
    <text evidence="1">Contains catalytic and regulatory chains.</text>
</comment>
<comment type="similarity">
    <text evidence="1">Belongs to the PyrI family.</text>
</comment>
<evidence type="ECO:0000255" key="1">
    <source>
        <dbReference type="HAMAP-Rule" id="MF_00002"/>
    </source>
</evidence>
<feature type="chain" id="PRO_0000142312" description="Aspartate carbamoyltransferase regulatory chain">
    <location>
        <begin position="1"/>
        <end position="153"/>
    </location>
</feature>
<feature type="binding site" evidence="1">
    <location>
        <position position="109"/>
    </location>
    <ligand>
        <name>Zn(2+)</name>
        <dbReference type="ChEBI" id="CHEBI:29105"/>
    </ligand>
</feature>
<feature type="binding site" evidence="1">
    <location>
        <position position="114"/>
    </location>
    <ligand>
        <name>Zn(2+)</name>
        <dbReference type="ChEBI" id="CHEBI:29105"/>
    </ligand>
</feature>
<feature type="binding site" evidence="1">
    <location>
        <position position="138"/>
    </location>
    <ligand>
        <name>Zn(2+)</name>
        <dbReference type="ChEBI" id="CHEBI:29105"/>
    </ligand>
</feature>
<feature type="binding site" evidence="1">
    <location>
        <position position="141"/>
    </location>
    <ligand>
        <name>Zn(2+)</name>
        <dbReference type="ChEBI" id="CHEBI:29105"/>
    </ligand>
</feature>
<keyword id="KW-0479">Metal-binding</keyword>
<keyword id="KW-0665">Pyrimidine biosynthesis</keyword>
<keyword id="KW-0862">Zinc</keyword>
<sequence length="153" mass="17087">MTHDNKLQVEAIKCGTVIDHIPAQVGFKLLSLFKLTETDQRITIGLNLPSGEMGRKDLIKIENTFLTDEQINQLALYAPQATVNRIDNYDVVGKSRPSLPERINNVLVCPNSNCISHAEPVSSSFAVKKRANDIALKCKYCEKEFSHYVVLAN</sequence>
<organism>
    <name type="scientific">Salmonella paratyphi A (strain ATCC 9150 / SARB42)</name>
    <dbReference type="NCBI Taxonomy" id="295319"/>
    <lineage>
        <taxon>Bacteria</taxon>
        <taxon>Pseudomonadati</taxon>
        <taxon>Pseudomonadota</taxon>
        <taxon>Gammaproteobacteria</taxon>
        <taxon>Enterobacterales</taxon>
        <taxon>Enterobacteriaceae</taxon>
        <taxon>Salmonella</taxon>
    </lineage>
</organism>
<name>PYRI_SALPA</name>